<name>YTZD_BACSU</name>
<accession>O34503</accession>
<proteinExistence type="predicted"/>
<keyword id="KW-1185">Reference proteome</keyword>
<sequence>MMKKEPERYIYDEQESQETTRLISEAYQSGYVDMPDQESSSPAE</sequence>
<feature type="chain" id="PRO_0000049910" description="Uncharacterized protein YtzD">
    <location>
        <begin position="1"/>
        <end position="44"/>
    </location>
</feature>
<organism>
    <name type="scientific">Bacillus subtilis (strain 168)</name>
    <dbReference type="NCBI Taxonomy" id="224308"/>
    <lineage>
        <taxon>Bacteria</taxon>
        <taxon>Bacillati</taxon>
        <taxon>Bacillota</taxon>
        <taxon>Bacilli</taxon>
        <taxon>Bacillales</taxon>
        <taxon>Bacillaceae</taxon>
        <taxon>Bacillus</taxon>
    </lineage>
</organism>
<gene>
    <name type="primary">ytzD</name>
    <name type="ordered locus">BSU29430</name>
</gene>
<dbReference type="EMBL" id="AL009126">
    <property type="protein sequence ID" value="CAB14903.2"/>
    <property type="molecule type" value="Genomic_DNA"/>
</dbReference>
<dbReference type="PIR" id="F70004">
    <property type="entry name" value="F70004"/>
</dbReference>
<dbReference type="RefSeq" id="NP_390821.2">
    <property type="nucleotide sequence ID" value="NC_000964.3"/>
</dbReference>
<dbReference type="RefSeq" id="WP_004399018.1">
    <property type="nucleotide sequence ID" value="NZ_OZ025638.1"/>
</dbReference>
<dbReference type="SMR" id="O34503"/>
<dbReference type="FunCoup" id="O34503">
    <property type="interactions" value="13"/>
</dbReference>
<dbReference type="STRING" id="224308.BSU29430"/>
<dbReference type="PaxDb" id="224308-BSU29430"/>
<dbReference type="EnsemblBacteria" id="CAB14903">
    <property type="protein sequence ID" value="CAB14903"/>
    <property type="gene ID" value="BSU_29430"/>
</dbReference>
<dbReference type="GeneID" id="936667"/>
<dbReference type="KEGG" id="bsu:BSU29430"/>
<dbReference type="PATRIC" id="fig|224308.43.peg.3081"/>
<dbReference type="InParanoid" id="O34503"/>
<dbReference type="OrthoDB" id="2907398at2"/>
<dbReference type="BioCyc" id="BSUB:BSU29430-MONOMER"/>
<dbReference type="Proteomes" id="UP000001570">
    <property type="component" value="Chromosome"/>
</dbReference>
<reference key="1">
    <citation type="journal article" date="1997" name="Nature">
        <title>The complete genome sequence of the Gram-positive bacterium Bacillus subtilis.</title>
        <authorList>
            <person name="Kunst F."/>
            <person name="Ogasawara N."/>
            <person name="Moszer I."/>
            <person name="Albertini A.M."/>
            <person name="Alloni G."/>
            <person name="Azevedo V."/>
            <person name="Bertero M.G."/>
            <person name="Bessieres P."/>
            <person name="Bolotin A."/>
            <person name="Borchert S."/>
            <person name="Borriss R."/>
            <person name="Boursier L."/>
            <person name="Brans A."/>
            <person name="Braun M."/>
            <person name="Brignell S.C."/>
            <person name="Bron S."/>
            <person name="Brouillet S."/>
            <person name="Bruschi C.V."/>
            <person name="Caldwell B."/>
            <person name="Capuano V."/>
            <person name="Carter N.M."/>
            <person name="Choi S.-K."/>
            <person name="Codani J.-J."/>
            <person name="Connerton I.F."/>
            <person name="Cummings N.J."/>
            <person name="Daniel R.A."/>
            <person name="Denizot F."/>
            <person name="Devine K.M."/>
            <person name="Duesterhoeft A."/>
            <person name="Ehrlich S.D."/>
            <person name="Emmerson P.T."/>
            <person name="Entian K.-D."/>
            <person name="Errington J."/>
            <person name="Fabret C."/>
            <person name="Ferrari E."/>
            <person name="Foulger D."/>
            <person name="Fritz C."/>
            <person name="Fujita M."/>
            <person name="Fujita Y."/>
            <person name="Fuma S."/>
            <person name="Galizzi A."/>
            <person name="Galleron N."/>
            <person name="Ghim S.-Y."/>
            <person name="Glaser P."/>
            <person name="Goffeau A."/>
            <person name="Golightly E.J."/>
            <person name="Grandi G."/>
            <person name="Guiseppi G."/>
            <person name="Guy B.J."/>
            <person name="Haga K."/>
            <person name="Haiech J."/>
            <person name="Harwood C.R."/>
            <person name="Henaut A."/>
            <person name="Hilbert H."/>
            <person name="Holsappel S."/>
            <person name="Hosono S."/>
            <person name="Hullo M.-F."/>
            <person name="Itaya M."/>
            <person name="Jones L.-M."/>
            <person name="Joris B."/>
            <person name="Karamata D."/>
            <person name="Kasahara Y."/>
            <person name="Klaerr-Blanchard M."/>
            <person name="Klein C."/>
            <person name="Kobayashi Y."/>
            <person name="Koetter P."/>
            <person name="Koningstein G."/>
            <person name="Krogh S."/>
            <person name="Kumano M."/>
            <person name="Kurita K."/>
            <person name="Lapidus A."/>
            <person name="Lardinois S."/>
            <person name="Lauber J."/>
            <person name="Lazarevic V."/>
            <person name="Lee S.-M."/>
            <person name="Levine A."/>
            <person name="Liu H."/>
            <person name="Masuda S."/>
            <person name="Mauel C."/>
            <person name="Medigue C."/>
            <person name="Medina N."/>
            <person name="Mellado R.P."/>
            <person name="Mizuno M."/>
            <person name="Moestl D."/>
            <person name="Nakai S."/>
            <person name="Noback M."/>
            <person name="Noone D."/>
            <person name="O'Reilly M."/>
            <person name="Ogawa K."/>
            <person name="Ogiwara A."/>
            <person name="Oudega B."/>
            <person name="Park S.-H."/>
            <person name="Parro V."/>
            <person name="Pohl T.M."/>
            <person name="Portetelle D."/>
            <person name="Porwollik S."/>
            <person name="Prescott A.M."/>
            <person name="Presecan E."/>
            <person name="Pujic P."/>
            <person name="Purnelle B."/>
            <person name="Rapoport G."/>
            <person name="Rey M."/>
            <person name="Reynolds S."/>
            <person name="Rieger M."/>
            <person name="Rivolta C."/>
            <person name="Rocha E."/>
            <person name="Roche B."/>
            <person name="Rose M."/>
            <person name="Sadaie Y."/>
            <person name="Sato T."/>
            <person name="Scanlan E."/>
            <person name="Schleich S."/>
            <person name="Schroeter R."/>
            <person name="Scoffone F."/>
            <person name="Sekiguchi J."/>
            <person name="Sekowska A."/>
            <person name="Seror S.J."/>
            <person name="Serror P."/>
            <person name="Shin B.-S."/>
            <person name="Soldo B."/>
            <person name="Sorokin A."/>
            <person name="Tacconi E."/>
            <person name="Takagi T."/>
            <person name="Takahashi H."/>
            <person name="Takemaru K."/>
            <person name="Takeuchi M."/>
            <person name="Tamakoshi A."/>
            <person name="Tanaka T."/>
            <person name="Terpstra P."/>
            <person name="Tognoni A."/>
            <person name="Tosato V."/>
            <person name="Uchiyama S."/>
            <person name="Vandenbol M."/>
            <person name="Vannier F."/>
            <person name="Vassarotti A."/>
            <person name="Viari A."/>
            <person name="Wambutt R."/>
            <person name="Wedler E."/>
            <person name="Wedler H."/>
            <person name="Weitzenegger T."/>
            <person name="Winters P."/>
            <person name="Wipat A."/>
            <person name="Yamamoto H."/>
            <person name="Yamane K."/>
            <person name="Yasumoto K."/>
            <person name="Yata K."/>
            <person name="Yoshida K."/>
            <person name="Yoshikawa H.-F."/>
            <person name="Zumstein E."/>
            <person name="Yoshikawa H."/>
            <person name="Danchin A."/>
        </authorList>
    </citation>
    <scope>NUCLEOTIDE SEQUENCE [LARGE SCALE GENOMIC DNA]</scope>
    <source>
        <strain>168</strain>
    </source>
</reference>
<protein>
    <recommendedName>
        <fullName>Uncharacterized protein YtzD</fullName>
    </recommendedName>
</protein>